<proteinExistence type="evidence at transcript level"/>
<accession>Q9GLW7</accession>
<dbReference type="EC" id="1.11.1.24" evidence="1"/>
<dbReference type="EMBL" id="AF110736">
    <property type="protein sequence ID" value="AAG13453.2"/>
    <property type="molecule type" value="mRNA"/>
</dbReference>
<dbReference type="SMR" id="Q9GLW7"/>
<dbReference type="GO" id="GO:0005739">
    <property type="term" value="C:mitochondrion"/>
    <property type="evidence" value="ECO:0007669"/>
    <property type="project" value="UniProtKB-SubCell"/>
</dbReference>
<dbReference type="GO" id="GO:0005782">
    <property type="term" value="C:peroxisomal matrix"/>
    <property type="evidence" value="ECO:0007669"/>
    <property type="project" value="UniProtKB-SubCell"/>
</dbReference>
<dbReference type="GO" id="GO:0008379">
    <property type="term" value="F:thioredoxin peroxidase activity"/>
    <property type="evidence" value="ECO:0007669"/>
    <property type="project" value="InterPro"/>
</dbReference>
<dbReference type="GO" id="GO:0045454">
    <property type="term" value="P:cell redox homeostasis"/>
    <property type="evidence" value="ECO:0007669"/>
    <property type="project" value="TreeGrafter"/>
</dbReference>
<dbReference type="GO" id="GO:0034599">
    <property type="term" value="P:cellular response to oxidative stress"/>
    <property type="evidence" value="ECO:0007669"/>
    <property type="project" value="InterPro"/>
</dbReference>
<dbReference type="GO" id="GO:0042744">
    <property type="term" value="P:hydrogen peroxide catabolic process"/>
    <property type="evidence" value="ECO:0007669"/>
    <property type="project" value="TreeGrafter"/>
</dbReference>
<dbReference type="CDD" id="cd03013">
    <property type="entry name" value="PRX5_like"/>
    <property type="match status" value="1"/>
</dbReference>
<dbReference type="FunFam" id="3.40.30.10:FF:000020">
    <property type="entry name" value="Peroxiredoxin"/>
    <property type="match status" value="1"/>
</dbReference>
<dbReference type="Gene3D" id="3.40.30.10">
    <property type="entry name" value="Glutaredoxin"/>
    <property type="match status" value="1"/>
</dbReference>
<dbReference type="InterPro" id="IPR037944">
    <property type="entry name" value="PRX5-like"/>
</dbReference>
<dbReference type="InterPro" id="IPR013740">
    <property type="entry name" value="Redoxin"/>
</dbReference>
<dbReference type="InterPro" id="IPR036249">
    <property type="entry name" value="Thioredoxin-like_sf"/>
</dbReference>
<dbReference type="InterPro" id="IPR013766">
    <property type="entry name" value="Thioredoxin_domain"/>
</dbReference>
<dbReference type="PANTHER" id="PTHR10430">
    <property type="entry name" value="PEROXIREDOXIN"/>
    <property type="match status" value="1"/>
</dbReference>
<dbReference type="PANTHER" id="PTHR10430:SF16">
    <property type="entry name" value="PEROXIREDOXIN-5, MITOCHONDRIAL"/>
    <property type="match status" value="1"/>
</dbReference>
<dbReference type="Pfam" id="PF08534">
    <property type="entry name" value="Redoxin"/>
    <property type="match status" value="1"/>
</dbReference>
<dbReference type="SUPFAM" id="SSF52833">
    <property type="entry name" value="Thioredoxin-like"/>
    <property type="match status" value="1"/>
</dbReference>
<dbReference type="PROSITE" id="PS51352">
    <property type="entry name" value="THIOREDOXIN_2"/>
    <property type="match status" value="1"/>
</dbReference>
<keyword id="KW-0007">Acetylation</keyword>
<keyword id="KW-0024">Alternative initiation</keyword>
<keyword id="KW-0049">Antioxidant</keyword>
<keyword id="KW-0963">Cytoplasm</keyword>
<keyword id="KW-1015">Disulfide bond</keyword>
<keyword id="KW-0449">Lipoprotein</keyword>
<keyword id="KW-0496">Mitochondrion</keyword>
<keyword id="KW-0560">Oxidoreductase</keyword>
<keyword id="KW-0564">Palmitate</keyword>
<keyword id="KW-0575">Peroxidase</keyword>
<keyword id="KW-0576">Peroxisome</keyword>
<keyword id="KW-0597">Phosphoprotein</keyword>
<keyword id="KW-0676">Redox-active center</keyword>
<keyword id="KW-0809">Transit peptide</keyword>
<reference key="1">
    <citation type="submission" date="2000-09" db="EMBL/GenBank/DDBJ databases">
        <title>Cloning and characterization of COS-7 AOEB166/PRDX5.</title>
        <authorList>
            <person name="Knoops B."/>
            <person name="Cherif H."/>
        </authorList>
    </citation>
    <scope>NUCLEOTIDE SEQUENCE [MRNA]</scope>
</reference>
<sequence>MGLAGVCVLRRSAGYILGGAARQSVAATAAARRRSEGGWASGGVRSFSRAAAAMAPIKVGDAIPAVEVFEGEPGNKVNLAELFKGKKGVLFGVPGAFTPGCSKTHLPGFVEQAEALKAKGVQVLACLSVNDAFVTGEWGRAHKAEGKVRLLADPTGAFGKETDLLLDDSLVSIFGNRRLKRFSMVVQDGIVKALNVEPDGTGLTCSLAPSIISQL</sequence>
<comment type="function">
    <text evidence="1">Thiol-specific peroxidase that catalyzes the reduction of hydrogen peroxide and organic hydroperoxides to water and alcohols, respectively. Plays a role in cell protection against oxidative stress by detoxifying peroxides and as sensor of hydrogen peroxide-mediated signaling events.</text>
</comment>
<comment type="catalytic activity">
    <reaction evidence="1">
        <text>a hydroperoxide + [thioredoxin]-dithiol = an alcohol + [thioredoxin]-disulfide + H2O</text>
        <dbReference type="Rhea" id="RHEA:62620"/>
        <dbReference type="Rhea" id="RHEA-COMP:10698"/>
        <dbReference type="Rhea" id="RHEA-COMP:10700"/>
        <dbReference type="ChEBI" id="CHEBI:15377"/>
        <dbReference type="ChEBI" id="CHEBI:29950"/>
        <dbReference type="ChEBI" id="CHEBI:30879"/>
        <dbReference type="ChEBI" id="CHEBI:35924"/>
        <dbReference type="ChEBI" id="CHEBI:50058"/>
        <dbReference type="EC" id="1.11.1.24"/>
    </reaction>
</comment>
<comment type="subunit">
    <text evidence="1">Monomer.</text>
</comment>
<comment type="subcellular location">
    <molecule>Isoform Mitochondrial</molecule>
    <subcellularLocation>
        <location evidence="1">Mitochondrion</location>
    </subcellularLocation>
</comment>
<comment type="subcellular location">
    <molecule>Isoform Cytoplasmic+peroxisomal</molecule>
    <subcellularLocation>
        <location evidence="1">Cytoplasm</location>
    </subcellularLocation>
    <subcellularLocation>
        <location evidence="1">Peroxisome matrix</location>
    </subcellularLocation>
</comment>
<comment type="alternative products">
    <event type="alternative initiation"/>
    <isoform>
        <id>Q9GLW7-1</id>
        <name>Mitochondrial</name>
        <sequence type="displayed"/>
    </isoform>
    <isoform>
        <id>Q9GLW7-2</id>
        <name>Cytoplasmic+peroxisomal</name>
        <sequence type="described" ref="VSP_018828"/>
    </isoform>
</comment>
<comment type="PTM">
    <text evidence="1">S-palmitoylated. Palmitoylation occurs on the active site, inhibiting its reactivity; therefore PRDX5 palmitoylation status determines its antioxidant capacity.</text>
</comment>
<comment type="PTM">
    <molecule>Isoform Mitochondrial</molecule>
    <text evidence="1">S-palmitoylated. Depalmitoylated by ABHD10.</text>
</comment>
<comment type="miscellaneous">
    <text evidence="1">The active site is a conserved redox-active cysteine residue, the peroxidatic cysteine (C(P)), which makes the nucleophilic attack on the peroxide substrate. The peroxide oxidizes the C(P)-SH to cysteine sulfenic acid (C(P)-SOH), which then reacts with another cysteine residue, the resolving cysteine (C(R)), to form a disulfide bridge. The disulfide is subsequently reduced by an appropriate electron donor to complete the catalytic cycle. In this atypical 2-Cys Prx, C(R) is present in the same subunit to form an intramolecular disulfide. The disulfide is subsequently reduced by thioredoxin.</text>
</comment>
<comment type="similarity">
    <text evidence="6">Belongs to the peroxiredoxin family. Prx5 subfamily.</text>
</comment>
<name>PRDX5_CHLAE</name>
<protein>
    <recommendedName>
        <fullName>Peroxiredoxin-5, mitochondrial</fullName>
        <ecNumber evidence="1">1.11.1.24</ecNumber>
    </recommendedName>
    <alternativeName>
        <fullName>Peroxiredoxin V</fullName>
        <shortName>Prx-V</shortName>
    </alternativeName>
    <alternativeName>
        <fullName>Thioredoxin peroxidase</fullName>
    </alternativeName>
    <alternativeName>
        <fullName evidence="6">Thioredoxin-dependent peroxiredoxin 5</fullName>
    </alternativeName>
</protein>
<organism>
    <name type="scientific">Chlorocebus aethiops</name>
    <name type="common">Green monkey</name>
    <name type="synonym">Cercopithecus aethiops</name>
    <dbReference type="NCBI Taxonomy" id="9534"/>
    <lineage>
        <taxon>Eukaryota</taxon>
        <taxon>Metazoa</taxon>
        <taxon>Chordata</taxon>
        <taxon>Craniata</taxon>
        <taxon>Vertebrata</taxon>
        <taxon>Euteleostomi</taxon>
        <taxon>Mammalia</taxon>
        <taxon>Eutheria</taxon>
        <taxon>Euarchontoglires</taxon>
        <taxon>Primates</taxon>
        <taxon>Haplorrhini</taxon>
        <taxon>Catarrhini</taxon>
        <taxon>Cercopithecidae</taxon>
        <taxon>Cercopithecinae</taxon>
        <taxon>Chlorocebus</taxon>
    </lineage>
</organism>
<feature type="transit peptide" description="Mitochondrion" evidence="4">
    <location>
        <begin position="1"/>
        <end position="53"/>
    </location>
</feature>
<feature type="chain" id="PRO_0000023790" description="Peroxiredoxin-5, mitochondrial">
    <location>
        <begin position="54"/>
        <end position="215"/>
    </location>
</feature>
<feature type="domain" description="Thioredoxin" evidence="5">
    <location>
        <begin position="57"/>
        <end position="215"/>
    </location>
</feature>
<feature type="short sequence motif" description="Microbody targeting signal" evidence="1">
    <location>
        <begin position="213"/>
        <end position="215"/>
    </location>
</feature>
<feature type="active site" description="Cysteine sulfenic acid (-SOH) intermediate" evidence="1">
    <location>
        <position position="101"/>
    </location>
</feature>
<feature type="modified residue" description="N6-acetyllysine" evidence="2">
    <location>
        <position position="76"/>
    </location>
</feature>
<feature type="modified residue" description="N6-acetyllysine; alternate" evidence="1">
    <location>
        <position position="84"/>
    </location>
</feature>
<feature type="modified residue" description="N6-succinyllysine; alternate" evidence="2">
    <location>
        <position position="84"/>
    </location>
</feature>
<feature type="modified residue" description="N6-succinyllysine" evidence="2">
    <location>
        <position position="117"/>
    </location>
</feature>
<feature type="modified residue" description="Phosphoserine" evidence="3">
    <location>
        <position position="172"/>
    </location>
</feature>
<feature type="modified residue" description="Phosphoserine" evidence="2">
    <location>
        <position position="183"/>
    </location>
</feature>
<feature type="lipid moiety-binding region" description="S-palmitoyl cysteine" evidence="1">
    <location>
        <position position="101"/>
    </location>
</feature>
<feature type="disulfide bond" description="Redox-active" evidence="5">
    <location>
        <begin position="101"/>
        <end position="205"/>
    </location>
</feature>
<feature type="splice variant" id="VSP_018828" description="In isoform Cytoplasmic+peroxisomal." evidence="6">
    <location>
        <begin position="1"/>
        <end position="53"/>
    </location>
</feature>
<gene>
    <name type="primary">PRDX5</name>
</gene>
<evidence type="ECO:0000250" key="1">
    <source>
        <dbReference type="UniProtKB" id="P30044"/>
    </source>
</evidence>
<evidence type="ECO:0000250" key="2">
    <source>
        <dbReference type="UniProtKB" id="P99029"/>
    </source>
</evidence>
<evidence type="ECO:0000250" key="3">
    <source>
        <dbReference type="UniProtKB" id="Q9R063"/>
    </source>
</evidence>
<evidence type="ECO:0000255" key="4"/>
<evidence type="ECO:0000255" key="5">
    <source>
        <dbReference type="PROSITE-ProRule" id="PRU00691"/>
    </source>
</evidence>
<evidence type="ECO:0000305" key="6"/>